<sequence>MQTKLLAIMLAAPVVFSSQEASASDFFGPEKISTEINLGTLSGKTKERVYEPEEGGRKVSQLDWKYSNAAILKGAVNWELNPWLSVGAAGWTTLNSRGGNMVDQDWMDSGTPGTWTDESRHPDTRLNYANEFDLNVKGWFLKESDYRLAIMAGYQESRYSFNATGGTYIYSENGGFRNETGALPDKIKVIGYKQHFKIPYVGLTGNYRYDNFEFGGAFKYSGWVRGSDNDEHYVRQTTFRSKVINQNYYSVAVNAGYYITPEAKVYIEGVWSRLTNKKGDTSLYDRSDNTSEHNNNGAGIENYNFITTAGLKYTF</sequence>
<dbReference type="EC" id="3.4.23.-"/>
<dbReference type="EMBL" id="X74278">
    <property type="protein sequence ID" value="CAA52338.1"/>
    <property type="molecule type" value="Genomic_DNA"/>
</dbReference>
<dbReference type="EMBL" id="AP001918">
    <property type="protein sequence ID" value="BAA97899.1"/>
    <property type="molecule type" value="Genomic_DNA"/>
</dbReference>
<dbReference type="PIR" id="A36944">
    <property type="entry name" value="A36944"/>
</dbReference>
<dbReference type="RefSeq" id="NP_061408.1">
    <property type="nucleotide sequence ID" value="NC_002483.1"/>
</dbReference>
<dbReference type="RefSeq" id="WP_001193612.1">
    <property type="nucleotide sequence ID" value="NZ_JACEFS010000051.1"/>
</dbReference>
<dbReference type="SMR" id="P34210"/>
<dbReference type="MEROPS" id="A26.002"/>
<dbReference type="TCDB" id="9.B.50.1.2">
    <property type="family name" value="the outer membrane beta-barrel endoprotease, omptin (omptin) family"/>
</dbReference>
<dbReference type="BRENDA" id="3.4.23.49">
    <property type="organism ID" value="2026"/>
</dbReference>
<dbReference type="PRO" id="PR:P34210"/>
<dbReference type="GO" id="GO:0009279">
    <property type="term" value="C:cell outer membrane"/>
    <property type="evidence" value="ECO:0007669"/>
    <property type="project" value="UniProtKB-SubCell"/>
</dbReference>
<dbReference type="GO" id="GO:0004190">
    <property type="term" value="F:aspartic-type endopeptidase activity"/>
    <property type="evidence" value="ECO:0007669"/>
    <property type="project" value="UniProtKB-KW"/>
</dbReference>
<dbReference type="GO" id="GO:0006508">
    <property type="term" value="P:proteolysis"/>
    <property type="evidence" value="ECO:0007669"/>
    <property type="project" value="UniProtKB-KW"/>
</dbReference>
<dbReference type="Gene3D" id="2.40.128.90">
    <property type="entry name" value="OMPT-like"/>
    <property type="match status" value="1"/>
</dbReference>
<dbReference type="InterPro" id="IPR020080">
    <property type="entry name" value="OM_adhesin/peptidase_omptin"/>
</dbReference>
<dbReference type="InterPro" id="IPR053724">
    <property type="entry name" value="OMP_A26_sf"/>
</dbReference>
<dbReference type="InterPro" id="IPR020079">
    <property type="entry name" value="Peptidase_A26_CS"/>
</dbReference>
<dbReference type="InterPro" id="IPR000036">
    <property type="entry name" value="Peptidase_A26_omptin"/>
</dbReference>
<dbReference type="NCBIfam" id="NF008222">
    <property type="entry name" value="PRK10993.1-1"/>
    <property type="match status" value="1"/>
</dbReference>
<dbReference type="NCBIfam" id="NF008224">
    <property type="entry name" value="PRK10993.1-4"/>
    <property type="match status" value="1"/>
</dbReference>
<dbReference type="Pfam" id="PF01278">
    <property type="entry name" value="Omptin"/>
    <property type="match status" value="1"/>
</dbReference>
<dbReference type="PIRSF" id="PIRSF001522">
    <property type="entry name" value="Peptidase_A26"/>
    <property type="match status" value="1"/>
</dbReference>
<dbReference type="PRINTS" id="PR00482">
    <property type="entry name" value="OMPTIN"/>
</dbReference>
<dbReference type="SUPFAM" id="SSF69917">
    <property type="entry name" value="OMPT-like"/>
    <property type="match status" value="1"/>
</dbReference>
<dbReference type="PROSITE" id="PS00834">
    <property type="entry name" value="OMPTIN_1"/>
    <property type="match status" value="1"/>
</dbReference>
<dbReference type="PROSITE" id="PS00835">
    <property type="entry name" value="OMPTIN_2"/>
    <property type="match status" value="1"/>
</dbReference>
<evidence type="ECO:0000250" key="1"/>
<evidence type="ECO:0000269" key="2">
    <source>
    </source>
</evidence>
<evidence type="ECO:0000305" key="3"/>
<accession>P34210</accession>
<protein>
    <recommendedName>
        <fullName>Outer membrane protease OmpP</fullName>
        <ecNumber>3.4.23.-</ecNumber>
    </recommendedName>
</protein>
<proteinExistence type="evidence at protein level"/>
<gene>
    <name type="primary">ompP</name>
    <name type="synonym">ompX</name>
    <name type="ordered locus">ECOK12F029</name>
</gene>
<organism>
    <name type="scientific">Escherichia coli (strain K12)</name>
    <dbReference type="NCBI Taxonomy" id="83333"/>
    <lineage>
        <taxon>Bacteria</taxon>
        <taxon>Pseudomonadati</taxon>
        <taxon>Pseudomonadota</taxon>
        <taxon>Gammaproteobacteria</taxon>
        <taxon>Enterobacterales</taxon>
        <taxon>Enterobacteriaceae</taxon>
        <taxon>Escherichia</taxon>
    </lineage>
</organism>
<geneLocation type="plasmid">
    <name>F</name>
</geneLocation>
<name>OMPP_ECOLI</name>
<feature type="signal peptide" evidence="2">
    <location>
        <begin position="1"/>
        <end position="23"/>
    </location>
</feature>
<feature type="chain" id="PRO_0000025817" description="Outer membrane protease OmpP">
    <location>
        <begin position="24"/>
        <end position="315"/>
    </location>
</feature>
<feature type="active site" evidence="1">
    <location>
        <position position="103"/>
    </location>
</feature>
<feature type="active site" evidence="1">
    <location>
        <position position="105"/>
    </location>
</feature>
<feature type="active site" evidence="1">
    <location>
        <position position="230"/>
    </location>
</feature>
<feature type="active site" evidence="1">
    <location>
        <position position="232"/>
    </location>
</feature>
<keyword id="KW-0064">Aspartyl protease</keyword>
<keyword id="KW-0998">Cell outer membrane</keyword>
<keyword id="KW-0903">Direct protein sequencing</keyword>
<keyword id="KW-0378">Hydrolase</keyword>
<keyword id="KW-0472">Membrane</keyword>
<keyword id="KW-0614">Plasmid</keyword>
<keyword id="KW-0645">Protease</keyword>
<keyword id="KW-0732">Signal</keyword>
<keyword id="KW-0812">Transmembrane</keyword>
<keyword id="KW-1134">Transmembrane beta strand</keyword>
<comment type="function">
    <text>Protease; also acts as a receptor for bacteriophage Ox2.</text>
</comment>
<comment type="subcellular location">
    <subcellularLocation>
        <location>Cell outer membrane</location>
        <topology>Multi-pass membrane protein</topology>
    </subcellularLocation>
</comment>
<comment type="similarity">
    <text evidence="3">Belongs to the peptidase A26 family.</text>
</comment>
<reference key="1">
    <citation type="journal article" date="1994" name="J. Bacteriol.">
        <title>New outer membrane-associated protease of Escherichia coli K-12.</title>
        <authorList>
            <person name="Kaufmann A."/>
            <person name="Stierhof Y.-D."/>
            <person name="Henning U."/>
        </authorList>
    </citation>
    <scope>NUCLEOTIDE SEQUENCE [GENOMIC DNA]</scope>
    <scope>PROTEIN SEQUENCE OF 24-43 AND 179-192</scope>
    <source>
        <strain>K12 / ATCC 12435 / DSM 5695 / NBRC 3302 / NCIMB 9481 / W1485</strain>
    </source>
</reference>
<reference key="2">
    <citation type="submission" date="2000-04" db="EMBL/GenBank/DDBJ databases">
        <title>Complete nucleotide sequence of the F plasmid: its implications for organization and diversification of plasmid genomes.</title>
        <authorList>
            <person name="Shimizu H."/>
            <person name="Saitoh Y."/>
            <person name="Suda Y."/>
            <person name="Uehara K."/>
            <person name="Sampei G."/>
            <person name="Mizobuchi K."/>
        </authorList>
    </citation>
    <scope>NUCLEOTIDE SEQUENCE [LARGE SCALE GENOMIC DNA]</scope>
    <source>
        <strain>K12 / CR63</strain>
    </source>
</reference>
<reference key="3">
    <citation type="journal article" date="1999" name="FEBS Lett.">
        <title>The plasmid F OmpP protease, a homologue of OmpT, as a potential obstacle to E. coli-based protein production.</title>
        <authorList>
            <person name="Matsuo E."/>
            <person name="Sampei G."/>
            <person name="Mizobuchi K."/>
            <person name="Ito K."/>
        </authorList>
    </citation>
    <scope>CHARACTERIZATION</scope>
</reference>